<proteinExistence type="inferred from homology"/>
<evidence type="ECO:0000255" key="1">
    <source>
        <dbReference type="HAMAP-Rule" id="MF_00616"/>
    </source>
</evidence>
<name>ALLA_SALEP</name>
<reference key="1">
    <citation type="journal article" date="2008" name="Genome Res.">
        <title>Comparative genome analysis of Salmonella enteritidis PT4 and Salmonella gallinarum 287/91 provides insights into evolutionary and host adaptation pathways.</title>
        <authorList>
            <person name="Thomson N.R."/>
            <person name="Clayton D.J."/>
            <person name="Windhorst D."/>
            <person name="Vernikos G."/>
            <person name="Davidson S."/>
            <person name="Churcher C."/>
            <person name="Quail M.A."/>
            <person name="Stevens M."/>
            <person name="Jones M.A."/>
            <person name="Watson M."/>
            <person name="Barron A."/>
            <person name="Layton A."/>
            <person name="Pickard D."/>
            <person name="Kingsley R.A."/>
            <person name="Bignell A."/>
            <person name="Clark L."/>
            <person name="Harris B."/>
            <person name="Ormond D."/>
            <person name="Abdellah Z."/>
            <person name="Brooks K."/>
            <person name="Cherevach I."/>
            <person name="Chillingworth T."/>
            <person name="Woodward J."/>
            <person name="Norberczak H."/>
            <person name="Lord A."/>
            <person name="Arrowsmith C."/>
            <person name="Jagels K."/>
            <person name="Moule S."/>
            <person name="Mungall K."/>
            <person name="Saunders M."/>
            <person name="Whitehead S."/>
            <person name="Chabalgoity J.A."/>
            <person name="Maskell D."/>
            <person name="Humphreys T."/>
            <person name="Roberts M."/>
            <person name="Barrow P.A."/>
            <person name="Dougan G."/>
            <person name="Parkhill J."/>
        </authorList>
    </citation>
    <scope>NUCLEOTIDE SEQUENCE [LARGE SCALE GENOMIC DNA]</scope>
    <source>
        <strain>P125109</strain>
    </source>
</reference>
<gene>
    <name evidence="1" type="primary">allA</name>
    <name type="ordered locus">SEN0496</name>
</gene>
<dbReference type="EC" id="4.3.2.3" evidence="1"/>
<dbReference type="EMBL" id="AM933172">
    <property type="protein sequence ID" value="CAR32082.1"/>
    <property type="molecule type" value="Genomic_DNA"/>
</dbReference>
<dbReference type="RefSeq" id="WP_000764661.1">
    <property type="nucleotide sequence ID" value="NC_011294.1"/>
</dbReference>
<dbReference type="SMR" id="B5QUS9"/>
<dbReference type="KEGG" id="set:SEN0496"/>
<dbReference type="HOGENOM" id="CLU_070848_1_1_6"/>
<dbReference type="UniPathway" id="UPA00395"/>
<dbReference type="Proteomes" id="UP000000613">
    <property type="component" value="Chromosome"/>
</dbReference>
<dbReference type="GO" id="GO:0004848">
    <property type="term" value="F:ureidoglycolate hydrolase activity"/>
    <property type="evidence" value="ECO:0007669"/>
    <property type="project" value="InterPro"/>
</dbReference>
<dbReference type="GO" id="GO:0050385">
    <property type="term" value="F:ureidoglycolate lyase activity"/>
    <property type="evidence" value="ECO:0007669"/>
    <property type="project" value="UniProtKB-UniRule"/>
</dbReference>
<dbReference type="GO" id="GO:0000256">
    <property type="term" value="P:allantoin catabolic process"/>
    <property type="evidence" value="ECO:0007669"/>
    <property type="project" value="UniProtKB-UniRule"/>
</dbReference>
<dbReference type="GO" id="GO:0006145">
    <property type="term" value="P:purine nucleobase catabolic process"/>
    <property type="evidence" value="ECO:0007669"/>
    <property type="project" value="UniProtKB-UniRule"/>
</dbReference>
<dbReference type="CDD" id="cd20298">
    <property type="entry name" value="cupin_UAH"/>
    <property type="match status" value="1"/>
</dbReference>
<dbReference type="FunFam" id="2.60.120.480:FF:000001">
    <property type="entry name" value="Ureidoglycolate lyase"/>
    <property type="match status" value="1"/>
</dbReference>
<dbReference type="Gene3D" id="2.60.120.480">
    <property type="entry name" value="Ureidoglycolate hydrolase"/>
    <property type="match status" value="1"/>
</dbReference>
<dbReference type="HAMAP" id="MF_00616">
    <property type="entry name" value="Ureidogly_lyase"/>
    <property type="match status" value="1"/>
</dbReference>
<dbReference type="InterPro" id="IPR011051">
    <property type="entry name" value="RmlC_Cupin_sf"/>
</dbReference>
<dbReference type="InterPro" id="IPR047233">
    <property type="entry name" value="UAH_cupin"/>
</dbReference>
<dbReference type="InterPro" id="IPR007247">
    <property type="entry name" value="Ureidogly_lyase"/>
</dbReference>
<dbReference type="InterPro" id="IPR023525">
    <property type="entry name" value="Ureidogly_lyase_bac"/>
</dbReference>
<dbReference type="InterPro" id="IPR024060">
    <property type="entry name" value="Ureidoglycolate_lyase_dom_sf"/>
</dbReference>
<dbReference type="NCBIfam" id="NF002948">
    <property type="entry name" value="PRK03606.1-1"/>
    <property type="match status" value="1"/>
</dbReference>
<dbReference type="NCBIfam" id="NF009932">
    <property type="entry name" value="PRK13395.1"/>
    <property type="match status" value="1"/>
</dbReference>
<dbReference type="PANTHER" id="PTHR21221">
    <property type="entry name" value="UREIDOGLYCOLATE HYDROLASE"/>
    <property type="match status" value="1"/>
</dbReference>
<dbReference type="PANTHER" id="PTHR21221:SF1">
    <property type="entry name" value="UREIDOGLYCOLATE LYASE"/>
    <property type="match status" value="1"/>
</dbReference>
<dbReference type="Pfam" id="PF04115">
    <property type="entry name" value="Ureidogly_lyase"/>
    <property type="match status" value="1"/>
</dbReference>
<dbReference type="PIRSF" id="PIRSF017306">
    <property type="entry name" value="Ureidogly_hydro"/>
    <property type="match status" value="1"/>
</dbReference>
<dbReference type="SUPFAM" id="SSF51182">
    <property type="entry name" value="RmlC-like cupins"/>
    <property type="match status" value="1"/>
</dbReference>
<keyword id="KW-0456">Lyase</keyword>
<keyword id="KW-0659">Purine metabolism</keyword>
<feature type="chain" id="PRO_1000130424" description="Ureidoglycolate lyase">
    <location>
        <begin position="1"/>
        <end position="160"/>
    </location>
</feature>
<protein>
    <recommendedName>
        <fullName evidence="1">Ureidoglycolate lyase</fullName>
        <ecNumber evidence="1">4.3.2.3</ecNumber>
    </recommendedName>
    <alternativeName>
        <fullName evidence="1">Ureidoglycolatase</fullName>
    </alternativeName>
</protein>
<sequence>MKLEVLPLDQKTFSAYGDVIETQERDFFHINNGLVERYHDLAKVEVLEQDRTLISINRAQPAAMPIVVHELERHPLGTQAFVPMNGEAFVVIVALGDDKPELSTLRAFISNGRQGVNYHRNVWHHPLFAWQTVTDFLTVDRGGSDNCDVESIPTHELCFA</sequence>
<organism>
    <name type="scientific">Salmonella enteritidis PT4 (strain P125109)</name>
    <dbReference type="NCBI Taxonomy" id="550537"/>
    <lineage>
        <taxon>Bacteria</taxon>
        <taxon>Pseudomonadati</taxon>
        <taxon>Pseudomonadota</taxon>
        <taxon>Gammaproteobacteria</taxon>
        <taxon>Enterobacterales</taxon>
        <taxon>Enterobacteriaceae</taxon>
        <taxon>Salmonella</taxon>
    </lineage>
</organism>
<accession>B5QUS9</accession>
<comment type="function">
    <text evidence="1">Catalyzes the catabolism of the allantoin degradation intermediate (S)-ureidoglycolate, generating urea and glyoxylate. Involved in the utilization of allantoin as nitrogen source.</text>
</comment>
<comment type="catalytic activity">
    <reaction evidence="1">
        <text>(S)-ureidoglycolate = urea + glyoxylate</text>
        <dbReference type="Rhea" id="RHEA:11304"/>
        <dbReference type="ChEBI" id="CHEBI:16199"/>
        <dbReference type="ChEBI" id="CHEBI:36655"/>
        <dbReference type="ChEBI" id="CHEBI:57296"/>
        <dbReference type="EC" id="4.3.2.3"/>
    </reaction>
</comment>
<comment type="cofactor">
    <cofactor evidence="1">
        <name>Ni(2+)</name>
        <dbReference type="ChEBI" id="CHEBI:49786"/>
    </cofactor>
</comment>
<comment type="pathway">
    <text evidence="1">Nitrogen metabolism; (S)-allantoin degradation.</text>
</comment>
<comment type="subunit">
    <text evidence="1">Homodimer.</text>
</comment>
<comment type="similarity">
    <text evidence="1">Belongs to the ureidoglycolate lyase family.</text>
</comment>